<keyword id="KW-0472">Membrane</keyword>
<keyword id="KW-0812">Transmembrane</keyword>
<keyword id="KW-1133">Transmembrane helix</keyword>
<gene>
    <name type="ordered locus">YML133W-B</name>
</gene>
<feature type="chain" id="PRO_0000406010" description="Putative UPF0479 protein YML133W-B">
    <location>
        <begin position="1"/>
        <end position="160"/>
    </location>
</feature>
<feature type="transmembrane region" description="Helical" evidence="1">
    <location>
        <begin position="39"/>
        <end position="59"/>
    </location>
</feature>
<feature type="transmembrane region" description="Helical" evidence="1">
    <location>
        <begin position="136"/>
        <end position="156"/>
    </location>
</feature>
<dbReference type="EMBL" id="Z50178">
    <property type="status" value="NOT_ANNOTATED_CDS"/>
    <property type="molecule type" value="Genomic_DNA"/>
</dbReference>
<dbReference type="EMBL" id="AF480013">
    <property type="protein sequence ID" value="AAL79326.1"/>
    <property type="molecule type" value="Genomic_DNA"/>
</dbReference>
<dbReference type="EnsemblFungi" id="YHR219C-A_mRNA">
    <property type="protein sequence ID" value="YHR219C-A"/>
    <property type="gene ID" value="YHR219C-A"/>
</dbReference>
<dbReference type="EnsemblFungi" id="YML133W-B_mRNA">
    <property type="protein sequence ID" value="YML133W-B"/>
    <property type="gene ID" value="YML133W-B"/>
</dbReference>
<dbReference type="EnsemblFungi" id="YNL339W-B_mRNA">
    <property type="protein sequence ID" value="YNL339W-B"/>
    <property type="gene ID" value="YNL339W-B"/>
</dbReference>
<dbReference type="AGR" id="SGD:S000028690"/>
<dbReference type="SGD" id="S000028690">
    <property type="gene designation" value="YML133W-B"/>
</dbReference>
<dbReference type="HOGENOM" id="CLU_139933_0_0_1"/>
<dbReference type="GO" id="GO:0016020">
    <property type="term" value="C:membrane"/>
    <property type="evidence" value="ECO:0007669"/>
    <property type="project" value="UniProtKB-SubCell"/>
</dbReference>
<sequence length="160" mass="18627">MMPAKLQLDVLRTLQSSARHGTQTLKNSNFLERFHKDRIVFCLPFFPALFFVPVQKVLQHLCLRFTQVAPYFIIQLFDLPSRHAENLAPLLASCRIQYTNCFSSSSNGQVPSIISLYLRVDLSPFYAKKFQIPYRVPMIWLDVFQVFFVFLVISQHSLHS</sequence>
<protein>
    <recommendedName>
        <fullName>Putative UPF0479 protein YML133W-B</fullName>
    </recommendedName>
</protein>
<proteinExistence type="uncertain"/>
<accession>P0CL35</accession>
<accession>Q8TF93</accession>
<name>YML3B_YEAST</name>
<organism>
    <name type="scientific">Saccharomyces cerevisiae (strain ATCC 204508 / S288c)</name>
    <name type="common">Baker's yeast</name>
    <dbReference type="NCBI Taxonomy" id="559292"/>
    <lineage>
        <taxon>Eukaryota</taxon>
        <taxon>Fungi</taxon>
        <taxon>Dikarya</taxon>
        <taxon>Ascomycota</taxon>
        <taxon>Saccharomycotina</taxon>
        <taxon>Saccharomycetes</taxon>
        <taxon>Saccharomycetales</taxon>
        <taxon>Saccharomycetaceae</taxon>
        <taxon>Saccharomyces</taxon>
    </lineage>
</organism>
<comment type="subcellular location">
    <subcellularLocation>
        <location evidence="2">Membrane</location>
        <topology evidence="2">Multi-pass membrane protein</topology>
    </subcellularLocation>
</comment>
<comment type="miscellaneous">
    <text evidence="2">Completely overlaps YML133C.</text>
</comment>
<comment type="similarity">
    <text evidence="2">Belongs to the UPF0479 family.</text>
</comment>
<comment type="caution">
    <text evidence="3">Product of a dubious gene prediction unlikely to encode a functional protein. Because of that it is not part of the S.cerevisiae S288c complete/reference proteome set.</text>
</comment>
<reference key="1">
    <citation type="journal article" date="1997" name="Nature">
        <title>The nucleotide sequence of Saccharomyces cerevisiae chromosome XIII.</title>
        <authorList>
            <person name="Bowman S."/>
            <person name="Churcher C.M."/>
            <person name="Badcock K."/>
            <person name="Brown D."/>
            <person name="Chillingworth T."/>
            <person name="Connor R."/>
            <person name="Dedman K."/>
            <person name="Devlin K."/>
            <person name="Gentles S."/>
            <person name="Hamlin N."/>
            <person name="Hunt S."/>
            <person name="Jagels K."/>
            <person name="Lye G."/>
            <person name="Moule S."/>
            <person name="Odell C."/>
            <person name="Pearson D."/>
            <person name="Rajandream M.A."/>
            <person name="Rice P."/>
            <person name="Skelton J."/>
            <person name="Walsh S.V."/>
            <person name="Whitehead S."/>
            <person name="Barrell B.G."/>
        </authorList>
    </citation>
    <scope>NUCLEOTIDE SEQUENCE [LARGE SCALE GENOMIC DNA]</scope>
    <source>
        <strain>ATCC 204508 / S288c</strain>
    </source>
</reference>
<reference key="2">
    <citation type="journal article" date="2014" name="G3 (Bethesda)">
        <title>The reference genome sequence of Saccharomyces cerevisiae: Then and now.</title>
        <authorList>
            <person name="Engel S.R."/>
            <person name="Dietrich F.S."/>
            <person name="Fisk D.G."/>
            <person name="Binkley G."/>
            <person name="Balakrishnan R."/>
            <person name="Costanzo M.C."/>
            <person name="Dwight S.S."/>
            <person name="Hitz B.C."/>
            <person name="Karra K."/>
            <person name="Nash R.S."/>
            <person name="Weng S."/>
            <person name="Wong E.D."/>
            <person name="Lloyd P."/>
            <person name="Skrzypek M.S."/>
            <person name="Miyasato S.R."/>
            <person name="Simison M."/>
            <person name="Cherry J.M."/>
        </authorList>
    </citation>
    <scope>GENOME REANNOTATION</scope>
    <source>
        <strain>ATCC 204508 / S288c</strain>
    </source>
</reference>
<reference key="3">
    <citation type="journal article" date="2002" name="Nat. Biotechnol.">
        <title>An integrated approach for finding overlooked genes in yeast.</title>
        <authorList>
            <person name="Kumar A."/>
            <person name="Harrison P.M."/>
            <person name="Cheung K.-H."/>
            <person name="Lan N."/>
            <person name="Echols N."/>
            <person name="Bertone P."/>
            <person name="Miller P."/>
            <person name="Gerstein M.B."/>
            <person name="Snyder M."/>
        </authorList>
    </citation>
    <scope>NUCLEOTIDE SEQUENCE [GENOMIC DNA]</scope>
</reference>
<evidence type="ECO:0000255" key="1"/>
<evidence type="ECO:0000305" key="2"/>
<evidence type="ECO:0000305" key="3">
    <source>
    </source>
</evidence>